<keyword id="KW-1185">Reference proteome</keyword>
<organismHost>
    <name type="scientific">Acanthamoeba polyphaga</name>
    <name type="common">Amoeba</name>
    <dbReference type="NCBI Taxonomy" id="5757"/>
</organismHost>
<organism>
    <name type="scientific">Acanthamoeba polyphaga mimivirus</name>
    <name type="common">APMV</name>
    <dbReference type="NCBI Taxonomy" id="212035"/>
    <lineage>
        <taxon>Viruses</taxon>
        <taxon>Varidnaviria</taxon>
        <taxon>Bamfordvirae</taxon>
        <taxon>Nucleocytoviricota</taxon>
        <taxon>Megaviricetes</taxon>
        <taxon>Imitervirales</taxon>
        <taxon>Mimiviridae</taxon>
        <taxon>Megamimivirinae</taxon>
        <taxon>Mimivirus</taxon>
        <taxon>Mimivirus bradfordmassiliense</taxon>
    </lineage>
</organism>
<proteinExistence type="predicted"/>
<sequence>MANLSFTENGDKAYNTSGSACIDFFVRITRSSQLTDYISTFGKAWNEDKNIAMKILYNLRDIRTGKGEKIIPVAIMTYLKFHLNSDIYNSIVTDFVTMYGCWKDLLKIVEIETRFRLSTPSVSNKNINPIEIKLFADQLQKDFDTVNNNTGSSKVAISLCAKWAPSEKQHYNKAPLLIADSIRSQMGLTPRQYRKMLTKLRSHLQVLEMLMSTHQYDKIDFSKLPSVALMKMKNAFNRDTNSQGIKSDFRVNLHTSYTKYLQDLSKGKTKVNTKGIQPHELVGQYLSSSDFDQLVESQWDAIKKGVSDSGTFNNVTAVVDVSGSMHGQPMQVAIALGILVAECTSGPYHGRVITFHEKPSWHHLTGSNLMEKVKCMRDAPWGGSTNMKSVFDLVLQNAINAKLKPHEMIDTLFIFTDMQFNQCDCSGLESTFEYGQRKFTEAGYTFPKVVCWNLRTSNSKSLPLMKNDEGYVMLSGFSAELLKCIMNAEEFNPMSMLLHVLEPYVLNPVFINSETVDINSIIDDESNKNNFNKAVERSKFKKAYKKSSNTNSTTNSMNPRRSTVSSEDWVLN</sequence>
<accession>Q5UNY4</accession>
<gene>
    <name type="ordered locus">MIMI_L728</name>
</gene>
<protein>
    <recommendedName>
        <fullName>Uncharacterized protein L728</fullName>
    </recommendedName>
</protein>
<feature type="chain" id="PRO_0000247376" description="Uncharacterized protein L728">
    <location>
        <begin position="1"/>
        <end position="572"/>
    </location>
</feature>
<feature type="region of interest" description="Disordered" evidence="1">
    <location>
        <begin position="543"/>
        <end position="572"/>
    </location>
</feature>
<feature type="compositionally biased region" description="Low complexity" evidence="1">
    <location>
        <begin position="547"/>
        <end position="563"/>
    </location>
</feature>
<reference key="1">
    <citation type="journal article" date="2004" name="Science">
        <title>The 1.2-megabase genome sequence of Mimivirus.</title>
        <authorList>
            <person name="Raoult D."/>
            <person name="Audic S."/>
            <person name="Robert C."/>
            <person name="Abergel C."/>
            <person name="Renesto P."/>
            <person name="Ogata H."/>
            <person name="La Scola B."/>
            <person name="Susan M."/>
            <person name="Claverie J.-M."/>
        </authorList>
    </citation>
    <scope>NUCLEOTIDE SEQUENCE [LARGE SCALE GENOMIC DNA]</scope>
    <source>
        <strain>Rowbotham-Bradford</strain>
    </source>
</reference>
<dbReference type="EMBL" id="AY653733">
    <property type="protein sequence ID" value="AAV50988.1"/>
    <property type="molecule type" value="Genomic_DNA"/>
</dbReference>
<dbReference type="SMR" id="Q5UNY4"/>
<dbReference type="KEGG" id="vg:9925382"/>
<dbReference type="OrthoDB" id="1944at10239"/>
<dbReference type="Proteomes" id="UP000001134">
    <property type="component" value="Genome"/>
</dbReference>
<dbReference type="Gene3D" id="3.40.50.410">
    <property type="entry name" value="von Willebrand factor, type A domain"/>
    <property type="match status" value="1"/>
</dbReference>
<dbReference type="InterPro" id="IPR056690">
    <property type="entry name" value="DUF7788"/>
</dbReference>
<dbReference type="InterPro" id="IPR011205">
    <property type="entry name" value="UCP015417_vWA"/>
</dbReference>
<dbReference type="InterPro" id="IPR036465">
    <property type="entry name" value="vWFA_dom_sf"/>
</dbReference>
<dbReference type="PANTHER" id="PTHR31373">
    <property type="entry name" value="OS06G0652100 PROTEIN"/>
    <property type="match status" value="1"/>
</dbReference>
<dbReference type="PANTHER" id="PTHR31373:SF27">
    <property type="entry name" value="TROVE DOMAIN-CONTAINING PROTEIN"/>
    <property type="match status" value="1"/>
</dbReference>
<dbReference type="Pfam" id="PF11443">
    <property type="entry name" value="DUF2828"/>
    <property type="match status" value="2"/>
</dbReference>
<dbReference type="Pfam" id="PF25043">
    <property type="entry name" value="DUF7788"/>
    <property type="match status" value="1"/>
</dbReference>
<dbReference type="PIRSF" id="PIRSF015417">
    <property type="entry name" value="T31B5_30_vWA"/>
    <property type="match status" value="1"/>
</dbReference>
<dbReference type="SUPFAM" id="SSF53300">
    <property type="entry name" value="vWA-like"/>
    <property type="match status" value="1"/>
</dbReference>
<evidence type="ECO:0000256" key="1">
    <source>
        <dbReference type="SAM" id="MobiDB-lite"/>
    </source>
</evidence>
<name>YL728_MIMIV</name>